<feature type="peptide" id="PRO_0000032204" description="Luffin P1a">
    <location>
        <begin position="1"/>
        <end position="47"/>
    </location>
</feature>
<feature type="peptide" id="PRO_0000032205" description="Luffin P1b">
    <location>
        <begin position="1"/>
        <end position="45"/>
    </location>
</feature>
<feature type="peptide" id="PRO_0000032206" description="Luffin P1c">
    <location>
        <begin position="3"/>
        <end position="45"/>
    </location>
</feature>
<feature type="site" description="Cleavage" evidence="3">
    <location>
        <begin position="2"/>
        <end position="3"/>
    </location>
</feature>
<feature type="site" description="Cleavage" evidence="3">
    <location>
        <begin position="45"/>
        <end position="46"/>
    </location>
</feature>
<feature type="disulfide bond">
    <location>
        <begin position="12"/>
        <end position="33"/>
    </location>
</feature>
<feature type="disulfide bond">
    <location>
        <begin position="16"/>
        <end position="29"/>
    </location>
</feature>
<feature type="helix" evidence="4">
    <location>
        <begin position="6"/>
        <end position="19"/>
    </location>
</feature>
<feature type="helix" evidence="4">
    <location>
        <begin position="24"/>
        <end position="41"/>
    </location>
</feature>
<keyword id="KW-0002">3D-structure</keyword>
<keyword id="KW-0903">Direct protein sequencing</keyword>
<keyword id="KW-1015">Disulfide bond</keyword>
<keyword id="KW-0326">Glycosidase</keyword>
<keyword id="KW-0378">Hydrolase</keyword>
<keyword id="KW-0611">Plant defense</keyword>
<keyword id="KW-0652">Protein synthesis inhibitor</keyword>
<keyword id="KW-0800">Toxin</keyword>
<accession>P56568</accession>
<accession>Q8GRS9</accession>
<dbReference type="EC" id="3.2.2.22"/>
<dbReference type="EMBL" id="AF537345">
    <property type="protein sequence ID" value="AAN06821.1"/>
    <property type="molecule type" value="mRNA"/>
</dbReference>
<dbReference type="EMBL" id="AY135368">
    <property type="protein sequence ID" value="AAN10153.1"/>
    <property type="molecule type" value="mRNA"/>
</dbReference>
<dbReference type="PIR" id="JC5557">
    <property type="entry name" value="JC5557"/>
</dbReference>
<dbReference type="PDB" id="2L37">
    <property type="method" value="NMR"/>
    <property type="chains" value="A=3-45"/>
</dbReference>
<dbReference type="PDB" id="6O3S">
    <property type="method" value="NMR"/>
    <property type="chains" value="A=1-47"/>
</dbReference>
<dbReference type="PDBsum" id="2L37"/>
<dbReference type="PDBsum" id="6O3S"/>
<dbReference type="SMR" id="P56568"/>
<dbReference type="EvolutionaryTrace" id="P56568"/>
<dbReference type="GO" id="GO:0030598">
    <property type="term" value="F:rRNA N-glycosylase activity"/>
    <property type="evidence" value="ECO:0000314"/>
    <property type="project" value="UniProtKB"/>
</dbReference>
<dbReference type="GO" id="GO:0090729">
    <property type="term" value="F:toxin activity"/>
    <property type="evidence" value="ECO:0007669"/>
    <property type="project" value="UniProtKB-KW"/>
</dbReference>
<dbReference type="GO" id="GO:0006952">
    <property type="term" value="P:defense response"/>
    <property type="evidence" value="ECO:0000314"/>
    <property type="project" value="UniProtKB"/>
</dbReference>
<dbReference type="GO" id="GO:0017148">
    <property type="term" value="P:negative regulation of translation"/>
    <property type="evidence" value="ECO:0000314"/>
    <property type="project" value="UniProtKB"/>
</dbReference>
<dbReference type="Gene3D" id="6.10.250.890">
    <property type="match status" value="1"/>
</dbReference>
<evidence type="ECO:0000269" key="1">
    <source>
    </source>
</evidence>
<evidence type="ECO:0000269" key="2">
    <source>
    </source>
</evidence>
<evidence type="ECO:0000305" key="3"/>
<evidence type="ECO:0007829" key="4">
    <source>
        <dbReference type="PDB" id="2L37"/>
    </source>
</evidence>
<organism>
    <name type="scientific">Luffa aegyptiaca</name>
    <name type="common">Sponge gourd</name>
    <name type="synonym">Luffa cylindrica</name>
    <dbReference type="NCBI Taxonomy" id="3670"/>
    <lineage>
        <taxon>Eukaryota</taxon>
        <taxon>Viridiplantae</taxon>
        <taxon>Streptophyta</taxon>
        <taxon>Embryophyta</taxon>
        <taxon>Tracheophyta</taxon>
        <taxon>Spermatophyta</taxon>
        <taxon>Magnoliopsida</taxon>
        <taxon>eudicotyledons</taxon>
        <taxon>Gunneridae</taxon>
        <taxon>Pentapetalae</taxon>
        <taxon>rosids</taxon>
        <taxon>fabids</taxon>
        <taxon>Cucurbitales</taxon>
        <taxon>Cucurbitaceae</taxon>
        <taxon>Sicyoeae</taxon>
        <taxon>Luffa</taxon>
    </lineage>
</organism>
<reference key="1">
    <citation type="journal article" date="1997" name="Biosci. Biotechnol. Biochem.">
        <title>Primary structure of 6.5k-arginine/glutamate-rich polypeptide from the seeds of sponge gourd (Luffa cylindrica).</title>
        <authorList>
            <person name="Kimura M."/>
            <person name="Park S.-S."/>
            <person name="Sakai R."/>
            <person name="Yamasaki N."/>
            <person name="Funatsu G."/>
        </authorList>
    </citation>
    <scope>PROTEIN SEQUENCE</scope>
    <scope>MASS SPECTROMETRY</scope>
    <source>
        <tissue>Seed</tissue>
    </source>
</reference>
<reference key="2">
    <citation type="journal article" date="2003" name="Peptides">
        <title>Purification and characterization of Luffin P1, a ribosome-inactivating peptide from the seeds of Luffa cylindrica.</title>
        <authorList>
            <person name="Li F."/>
            <person name="Yang X.-X."/>
            <person name="Xia H.-C."/>
            <person name="Zeng R."/>
            <person name="Hu W.-G."/>
            <person name="Li Z."/>
            <person name="Zhang Z.-C."/>
        </authorList>
    </citation>
    <scope>NUCLEOTIDE SEQUENCE [MRNA] OF 5-45</scope>
    <scope>PROTEIN SEQUENCE OF 3-13</scope>
    <scope>FUNCTION</scope>
    <scope>CATALYTIC ACTIVITY</scope>
    <scope>MASS SPECTROMETRY</scope>
    <source>
        <tissue>Seed</tissue>
    </source>
</reference>
<proteinExistence type="evidence at protein level"/>
<comment type="function">
    <text evidence="1">Inhibits protein synthesis in animal cells.</text>
</comment>
<comment type="catalytic activity">
    <reaction evidence="1">
        <text>Endohydrolysis of the N-glycosidic bond at one specific adenosine on the 28S rRNA.</text>
        <dbReference type="EC" id="3.2.2.22"/>
    </reaction>
</comment>
<comment type="subunit">
    <text>Homotetramer.</text>
</comment>
<comment type="mass spectrometry">
    <molecule>Luffin P1a</molecule>
</comment>
<comment type="mass spectrometry">
    <molecule>Luffin P1c</molecule>
</comment>
<sequence>PRGSPRTEYEACRVRCQVAEHGVERQRRCQQVCEKRLREREGRREVD</sequence>
<protein>
    <recommendedName>
        <fullName>Ribosome-inactivating protein luffin P1</fullName>
        <ecNumber>3.2.2.22</ecNumber>
    </recommendedName>
    <alternativeName>
        <fullName>Arginine/glutamate-rich polypeptide</fullName>
        <shortName>AGRP</shortName>
    </alternativeName>
    <component>
        <recommendedName>
            <fullName>Luffin P1a</fullName>
        </recommendedName>
    </component>
    <component>
        <recommendedName>
            <fullName>Luffin P1b</fullName>
        </recommendedName>
    </component>
    <component>
        <recommendedName>
            <fullName>Luffin P1c</fullName>
        </recommendedName>
    </component>
</protein>
<name>RIP1_LUFAE</name>